<protein>
    <recommendedName>
        <fullName evidence="1">Proline--tRNA ligase</fullName>
        <ecNumber evidence="1">6.1.1.15</ecNumber>
    </recommendedName>
    <alternativeName>
        <fullName evidence="1">Prolyl-tRNA synthetase</fullName>
        <shortName evidence="1">ProRS</shortName>
    </alternativeName>
</protein>
<accession>B0KTK4</accession>
<feature type="chain" id="PRO_1000087848" description="Proline--tRNA ligase">
    <location>
        <begin position="1"/>
        <end position="571"/>
    </location>
</feature>
<keyword id="KW-0030">Aminoacyl-tRNA synthetase</keyword>
<keyword id="KW-0067">ATP-binding</keyword>
<keyword id="KW-0963">Cytoplasm</keyword>
<keyword id="KW-0436">Ligase</keyword>
<keyword id="KW-0547">Nucleotide-binding</keyword>
<keyword id="KW-0648">Protein biosynthesis</keyword>
<name>SYP_PSEPG</name>
<gene>
    <name evidence="1" type="primary">proS</name>
    <name type="ordered locus">PputGB1_4213</name>
</gene>
<dbReference type="EC" id="6.1.1.15" evidence="1"/>
<dbReference type="EMBL" id="CP000926">
    <property type="protein sequence ID" value="ABZ00102.1"/>
    <property type="molecule type" value="Genomic_DNA"/>
</dbReference>
<dbReference type="RefSeq" id="WP_012273778.1">
    <property type="nucleotide sequence ID" value="NC_010322.1"/>
</dbReference>
<dbReference type="SMR" id="B0KTK4"/>
<dbReference type="KEGG" id="ppg:PputGB1_4213"/>
<dbReference type="eggNOG" id="COG0442">
    <property type="taxonomic scope" value="Bacteria"/>
</dbReference>
<dbReference type="HOGENOM" id="CLU_016739_0_0_6"/>
<dbReference type="Proteomes" id="UP000002157">
    <property type="component" value="Chromosome"/>
</dbReference>
<dbReference type="GO" id="GO:0005829">
    <property type="term" value="C:cytosol"/>
    <property type="evidence" value="ECO:0007669"/>
    <property type="project" value="TreeGrafter"/>
</dbReference>
<dbReference type="GO" id="GO:0002161">
    <property type="term" value="F:aminoacyl-tRNA deacylase activity"/>
    <property type="evidence" value="ECO:0007669"/>
    <property type="project" value="InterPro"/>
</dbReference>
<dbReference type="GO" id="GO:0005524">
    <property type="term" value="F:ATP binding"/>
    <property type="evidence" value="ECO:0007669"/>
    <property type="project" value="UniProtKB-UniRule"/>
</dbReference>
<dbReference type="GO" id="GO:0004827">
    <property type="term" value="F:proline-tRNA ligase activity"/>
    <property type="evidence" value="ECO:0007669"/>
    <property type="project" value="UniProtKB-UniRule"/>
</dbReference>
<dbReference type="GO" id="GO:0006433">
    <property type="term" value="P:prolyl-tRNA aminoacylation"/>
    <property type="evidence" value="ECO:0007669"/>
    <property type="project" value="UniProtKB-UniRule"/>
</dbReference>
<dbReference type="CDD" id="cd04334">
    <property type="entry name" value="ProRS-INS"/>
    <property type="match status" value="1"/>
</dbReference>
<dbReference type="CDD" id="cd00861">
    <property type="entry name" value="ProRS_anticodon_short"/>
    <property type="match status" value="1"/>
</dbReference>
<dbReference type="CDD" id="cd00779">
    <property type="entry name" value="ProRS_core_prok"/>
    <property type="match status" value="1"/>
</dbReference>
<dbReference type="FunFam" id="3.30.930.10:FF:000043">
    <property type="entry name" value="Proline--tRNA ligase"/>
    <property type="match status" value="1"/>
</dbReference>
<dbReference type="FunFam" id="3.30.930.10:FF:000097">
    <property type="entry name" value="Proline--tRNA ligase"/>
    <property type="match status" value="1"/>
</dbReference>
<dbReference type="FunFam" id="3.90.960.10:FF:000001">
    <property type="entry name" value="Proline--tRNA ligase"/>
    <property type="match status" value="1"/>
</dbReference>
<dbReference type="Gene3D" id="3.40.50.800">
    <property type="entry name" value="Anticodon-binding domain"/>
    <property type="match status" value="1"/>
</dbReference>
<dbReference type="Gene3D" id="3.30.930.10">
    <property type="entry name" value="Bira Bifunctional Protein, Domain 2"/>
    <property type="match status" value="2"/>
</dbReference>
<dbReference type="HAMAP" id="MF_01569">
    <property type="entry name" value="Pro_tRNA_synth_type1"/>
    <property type="match status" value="1"/>
</dbReference>
<dbReference type="InterPro" id="IPR002314">
    <property type="entry name" value="aa-tRNA-synt_IIb"/>
</dbReference>
<dbReference type="InterPro" id="IPR006195">
    <property type="entry name" value="aa-tRNA-synth_II"/>
</dbReference>
<dbReference type="InterPro" id="IPR045864">
    <property type="entry name" value="aa-tRNA-synth_II/BPL/LPL"/>
</dbReference>
<dbReference type="InterPro" id="IPR004154">
    <property type="entry name" value="Anticodon-bd"/>
</dbReference>
<dbReference type="InterPro" id="IPR036621">
    <property type="entry name" value="Anticodon-bd_dom_sf"/>
</dbReference>
<dbReference type="InterPro" id="IPR002316">
    <property type="entry name" value="Pro-tRNA-ligase_IIa"/>
</dbReference>
<dbReference type="InterPro" id="IPR004500">
    <property type="entry name" value="Pro-tRNA-synth_IIa_bac-type"/>
</dbReference>
<dbReference type="InterPro" id="IPR023717">
    <property type="entry name" value="Pro-tRNA-Synthase_IIa_type1"/>
</dbReference>
<dbReference type="InterPro" id="IPR050062">
    <property type="entry name" value="Pro-tRNA_synthetase"/>
</dbReference>
<dbReference type="InterPro" id="IPR044140">
    <property type="entry name" value="ProRS_anticodon_short"/>
</dbReference>
<dbReference type="InterPro" id="IPR033730">
    <property type="entry name" value="ProRS_core_prok"/>
</dbReference>
<dbReference type="InterPro" id="IPR036754">
    <property type="entry name" value="YbaK/aa-tRNA-synt-asso_dom_sf"/>
</dbReference>
<dbReference type="InterPro" id="IPR007214">
    <property type="entry name" value="YbaK/aa-tRNA-synth-assoc-dom"/>
</dbReference>
<dbReference type="NCBIfam" id="NF006625">
    <property type="entry name" value="PRK09194.1"/>
    <property type="match status" value="1"/>
</dbReference>
<dbReference type="NCBIfam" id="TIGR00409">
    <property type="entry name" value="proS_fam_II"/>
    <property type="match status" value="1"/>
</dbReference>
<dbReference type="PANTHER" id="PTHR42753">
    <property type="entry name" value="MITOCHONDRIAL RIBOSOME PROTEIN L39/PROLYL-TRNA LIGASE FAMILY MEMBER"/>
    <property type="match status" value="1"/>
</dbReference>
<dbReference type="PANTHER" id="PTHR42753:SF2">
    <property type="entry name" value="PROLINE--TRNA LIGASE"/>
    <property type="match status" value="1"/>
</dbReference>
<dbReference type="Pfam" id="PF03129">
    <property type="entry name" value="HGTP_anticodon"/>
    <property type="match status" value="1"/>
</dbReference>
<dbReference type="Pfam" id="PF00587">
    <property type="entry name" value="tRNA-synt_2b"/>
    <property type="match status" value="1"/>
</dbReference>
<dbReference type="Pfam" id="PF04073">
    <property type="entry name" value="tRNA_edit"/>
    <property type="match status" value="1"/>
</dbReference>
<dbReference type="PIRSF" id="PIRSF001535">
    <property type="entry name" value="ProRS_1"/>
    <property type="match status" value="1"/>
</dbReference>
<dbReference type="PRINTS" id="PR01046">
    <property type="entry name" value="TRNASYNTHPRO"/>
</dbReference>
<dbReference type="SUPFAM" id="SSF52954">
    <property type="entry name" value="Class II aaRS ABD-related"/>
    <property type="match status" value="1"/>
</dbReference>
<dbReference type="SUPFAM" id="SSF55681">
    <property type="entry name" value="Class II aaRS and biotin synthetases"/>
    <property type="match status" value="1"/>
</dbReference>
<dbReference type="SUPFAM" id="SSF55826">
    <property type="entry name" value="YbaK/ProRS associated domain"/>
    <property type="match status" value="1"/>
</dbReference>
<dbReference type="PROSITE" id="PS50862">
    <property type="entry name" value="AA_TRNA_LIGASE_II"/>
    <property type="match status" value="1"/>
</dbReference>
<organism>
    <name type="scientific">Pseudomonas putida (strain GB-1)</name>
    <dbReference type="NCBI Taxonomy" id="76869"/>
    <lineage>
        <taxon>Bacteria</taxon>
        <taxon>Pseudomonadati</taxon>
        <taxon>Pseudomonadota</taxon>
        <taxon>Gammaproteobacteria</taxon>
        <taxon>Pseudomonadales</taxon>
        <taxon>Pseudomonadaceae</taxon>
        <taxon>Pseudomonas</taxon>
    </lineage>
</organism>
<comment type="function">
    <text evidence="1">Catalyzes the attachment of proline to tRNA(Pro) in a two-step reaction: proline is first activated by ATP to form Pro-AMP and then transferred to the acceptor end of tRNA(Pro). As ProRS can inadvertently accommodate and process non-cognate amino acids such as alanine and cysteine, to avoid such errors it has two additional distinct editing activities against alanine. One activity is designated as 'pretransfer' editing and involves the tRNA(Pro)-independent hydrolysis of activated Ala-AMP. The other activity is designated 'posttransfer' editing and involves deacylation of mischarged Ala-tRNA(Pro). The misacylated Cys-tRNA(Pro) is not edited by ProRS.</text>
</comment>
<comment type="catalytic activity">
    <reaction evidence="1">
        <text>tRNA(Pro) + L-proline + ATP = L-prolyl-tRNA(Pro) + AMP + diphosphate</text>
        <dbReference type="Rhea" id="RHEA:14305"/>
        <dbReference type="Rhea" id="RHEA-COMP:9700"/>
        <dbReference type="Rhea" id="RHEA-COMP:9702"/>
        <dbReference type="ChEBI" id="CHEBI:30616"/>
        <dbReference type="ChEBI" id="CHEBI:33019"/>
        <dbReference type="ChEBI" id="CHEBI:60039"/>
        <dbReference type="ChEBI" id="CHEBI:78442"/>
        <dbReference type="ChEBI" id="CHEBI:78532"/>
        <dbReference type="ChEBI" id="CHEBI:456215"/>
        <dbReference type="EC" id="6.1.1.15"/>
    </reaction>
</comment>
<comment type="subunit">
    <text evidence="1">Homodimer.</text>
</comment>
<comment type="subcellular location">
    <subcellularLocation>
        <location evidence="1">Cytoplasm</location>
    </subcellularLocation>
</comment>
<comment type="domain">
    <text evidence="1">Consists of three domains: the N-terminal catalytic domain, the editing domain and the C-terminal anticodon-binding domain.</text>
</comment>
<comment type="similarity">
    <text evidence="1">Belongs to the class-II aminoacyl-tRNA synthetase family. ProS type 1 subfamily.</text>
</comment>
<sequence>MRTSQYLLATQKETPADAVVISHQLMLRAGMIRKLASGLYTWLPMGLRVMRKVEAVVREEMNAAGALEVLMPSIQPAELWQESGRWEQYGPELLRLKDRHQRDFCVGPTHEEVITDLARNELSSYKQLPLNMYQIQTKFRDEIRPRFGLMRGREFIMKDAYSFHADQASLQETYDRMHQAYSNVFTRLGLDFRPVQADTGSIGGSYSHEFHVLAESGEDDVIFSDSSDYAANIEKAEAIPRETVRPAPTEELRLVDTPDAKTIAQLVENHGLAIEKTVKTLIVRGAEEGKLVALVVRGDHELNEIKAAKLEQVADPLIMATDAELREAIGAGAGSLGPLNLPLEVVIDRSVALMSDFGIGANIDDKHYFGVNWERDLPVPQVADLRNVVEGDPSPDGQGTLVIKRGIEVGHIFQLGTKYSEALKCQVLGENGKPVVLSMGCYGIGVSRVVAAAIEQSYDDKGIIWNDALAPFQIALVPLRYETDVVREATDKLYAELTAAGFEVLLDDRDKKTSPGIKFADMELIGIPHRIVVSDRGLADGNLEYKHRTEQDAQALPLNEVLTFLQARVRR</sequence>
<proteinExistence type="inferred from homology"/>
<evidence type="ECO:0000255" key="1">
    <source>
        <dbReference type="HAMAP-Rule" id="MF_01569"/>
    </source>
</evidence>
<reference key="1">
    <citation type="submission" date="2008-01" db="EMBL/GenBank/DDBJ databases">
        <title>Complete sequence of Pseudomonas putida GB-1.</title>
        <authorList>
            <consortium name="US DOE Joint Genome Institute"/>
            <person name="Copeland A."/>
            <person name="Lucas S."/>
            <person name="Lapidus A."/>
            <person name="Barry K."/>
            <person name="Glavina del Rio T."/>
            <person name="Dalin E."/>
            <person name="Tice H."/>
            <person name="Pitluck S."/>
            <person name="Bruce D."/>
            <person name="Goodwin L."/>
            <person name="Chertkov O."/>
            <person name="Brettin T."/>
            <person name="Detter J.C."/>
            <person name="Han C."/>
            <person name="Kuske C.R."/>
            <person name="Schmutz J."/>
            <person name="Larimer F."/>
            <person name="Land M."/>
            <person name="Hauser L."/>
            <person name="Kyrpides N."/>
            <person name="Kim E."/>
            <person name="McCarthy J.K."/>
            <person name="Richardson P."/>
        </authorList>
    </citation>
    <scope>NUCLEOTIDE SEQUENCE [LARGE SCALE GENOMIC DNA]</scope>
    <source>
        <strain>GB-1</strain>
    </source>
</reference>